<comment type="similarity">
    <text evidence="1">Belongs to the D-glutamate cyclase family.</text>
</comment>
<evidence type="ECO:0000255" key="1">
    <source>
        <dbReference type="HAMAP-Rule" id="MF_01830"/>
    </source>
</evidence>
<sequence>MHVNEMRPDEVRALIRKGEITGPTAGMAGGFTQANLVILKKELAFEFLLFCQRNQKPCPILDVTDPGSPVPSITAPDADIRTDFPKYRVYKRGELADEVTDISSLWEDDMVGFLIGCSFTFEQALMNNGIPVRHIEEKRNVPMYQTNIPCVPAGRFQGPMVVSMRPVPEEQAVRAVQVTSRLPAVHGGPVHIGSPEAIGITDIAKPDFGDAVTIKKGEVPVFWACGVTPQAVAMHARPELMITHSPGHMLVTDVRDEQFGVL</sequence>
<dbReference type="EC" id="4.2.1.-" evidence="1"/>
<dbReference type="EMBL" id="AE017333">
    <property type="protein sequence ID" value="AAU39456.1"/>
    <property type="molecule type" value="Genomic_DNA"/>
</dbReference>
<dbReference type="EMBL" id="CP000002">
    <property type="protein sequence ID" value="AAU22098.1"/>
    <property type="molecule type" value="Genomic_DNA"/>
</dbReference>
<dbReference type="SMR" id="Q65NA8"/>
<dbReference type="STRING" id="279010.BL02808"/>
<dbReference type="KEGG" id="bld:BLi00500"/>
<dbReference type="KEGG" id="bli:BL02808"/>
<dbReference type="eggNOG" id="COG4336">
    <property type="taxonomic scope" value="Bacteria"/>
</dbReference>
<dbReference type="HOGENOM" id="CLU_059759_0_0_9"/>
<dbReference type="Proteomes" id="UP000000606">
    <property type="component" value="Chromosome"/>
</dbReference>
<dbReference type="GO" id="GO:0016829">
    <property type="term" value="F:lyase activity"/>
    <property type="evidence" value="ECO:0007669"/>
    <property type="project" value="UniProtKB-KW"/>
</dbReference>
<dbReference type="FunFam" id="3.30.2040.10:FF:000001">
    <property type="entry name" value="D-glutamate cyclase, mitochondrial"/>
    <property type="match status" value="1"/>
</dbReference>
<dbReference type="Gene3D" id="3.40.1640.10">
    <property type="entry name" value="PSTPO5379-like"/>
    <property type="match status" value="1"/>
</dbReference>
<dbReference type="Gene3D" id="3.30.2040.10">
    <property type="entry name" value="PSTPO5379-like domain"/>
    <property type="match status" value="1"/>
</dbReference>
<dbReference type="HAMAP" id="MF_01830">
    <property type="entry name" value="Hydro_lyase"/>
    <property type="match status" value="1"/>
</dbReference>
<dbReference type="InterPro" id="IPR009906">
    <property type="entry name" value="D-Glu_cyclase"/>
</dbReference>
<dbReference type="InterPro" id="IPR038021">
    <property type="entry name" value="Putative_hydro-lyase"/>
</dbReference>
<dbReference type="InterPro" id="IPR016938">
    <property type="entry name" value="UPF0317"/>
</dbReference>
<dbReference type="NCBIfam" id="NF003969">
    <property type="entry name" value="PRK05463.1"/>
    <property type="match status" value="1"/>
</dbReference>
<dbReference type="PANTHER" id="PTHR32022">
    <property type="entry name" value="D-GLUTAMATE CYCLASE, MITOCHONDRIAL"/>
    <property type="match status" value="1"/>
</dbReference>
<dbReference type="PANTHER" id="PTHR32022:SF10">
    <property type="entry name" value="D-GLUTAMATE CYCLASE, MITOCHONDRIAL"/>
    <property type="match status" value="1"/>
</dbReference>
<dbReference type="Pfam" id="PF07286">
    <property type="entry name" value="D-Glu_cyclase"/>
    <property type="match status" value="1"/>
</dbReference>
<dbReference type="PIRSF" id="PIRSF029755">
    <property type="entry name" value="UCP029755"/>
    <property type="match status" value="1"/>
</dbReference>
<dbReference type="SUPFAM" id="SSF160920">
    <property type="entry name" value="PSTPO5379-like"/>
    <property type="match status" value="1"/>
</dbReference>
<protein>
    <recommendedName>
        <fullName evidence="1">Putative hydro-lyase BLi00500/BL02808</fullName>
        <ecNumber evidence="1">4.2.1.-</ecNumber>
    </recommendedName>
</protein>
<feature type="chain" id="PRO_0000217160" description="Putative hydro-lyase BLi00500/BL02808">
    <location>
        <begin position="1"/>
        <end position="262"/>
    </location>
</feature>
<accession>Q65NA8</accession>
<accession>Q62YR0</accession>
<organism>
    <name type="scientific">Bacillus licheniformis (strain ATCC 14580 / DSM 13 / JCM 2505 / CCUG 7422 / NBRC 12200 / NCIMB 9375 / NCTC 10341 / NRRL NRS-1264 / Gibson 46)</name>
    <dbReference type="NCBI Taxonomy" id="279010"/>
    <lineage>
        <taxon>Bacteria</taxon>
        <taxon>Bacillati</taxon>
        <taxon>Bacillota</taxon>
        <taxon>Bacilli</taxon>
        <taxon>Bacillales</taxon>
        <taxon>Bacillaceae</taxon>
        <taxon>Bacillus</taxon>
    </lineage>
</organism>
<reference key="1">
    <citation type="journal article" date="2004" name="J. Mol. Microbiol. Biotechnol.">
        <title>The complete genome sequence of Bacillus licheniformis DSM13, an organism with great industrial potential.</title>
        <authorList>
            <person name="Veith B."/>
            <person name="Herzberg C."/>
            <person name="Steckel S."/>
            <person name="Feesche J."/>
            <person name="Maurer K.H."/>
            <person name="Ehrenreich P."/>
            <person name="Baeumer S."/>
            <person name="Henne A."/>
            <person name="Liesegang H."/>
            <person name="Merkl R."/>
            <person name="Ehrenreich A."/>
            <person name="Gottschalk G."/>
        </authorList>
    </citation>
    <scope>NUCLEOTIDE SEQUENCE [LARGE SCALE GENOMIC DNA]</scope>
    <source>
        <strain>ATCC 14580 / DSM 13 / JCM 2505 / CCUG 7422 / NBRC 12200 / NCIMB 9375 / NCTC 10341 / NRRL NRS-1264 / Gibson 46</strain>
    </source>
</reference>
<reference key="2">
    <citation type="journal article" date="2004" name="Genome Biol.">
        <title>Complete genome sequence of the industrial bacterium Bacillus licheniformis and comparisons with closely related Bacillus species.</title>
        <authorList>
            <person name="Rey M.W."/>
            <person name="Ramaiya P."/>
            <person name="Nelson B.A."/>
            <person name="Brody-Karpin S.D."/>
            <person name="Zaretsky E.J."/>
            <person name="Tang M."/>
            <person name="Lopez de Leon A."/>
            <person name="Xiang H."/>
            <person name="Gusti V."/>
            <person name="Clausen I.G."/>
            <person name="Olsen P.B."/>
            <person name="Rasmussen M.D."/>
            <person name="Andersen J.T."/>
            <person name="Joergensen P.L."/>
            <person name="Larsen T.S."/>
            <person name="Sorokin A."/>
            <person name="Bolotin A."/>
            <person name="Lapidus A."/>
            <person name="Galleron N."/>
            <person name="Ehrlich S.D."/>
            <person name="Berka R.M."/>
        </authorList>
    </citation>
    <scope>NUCLEOTIDE SEQUENCE [LARGE SCALE GENOMIC DNA]</scope>
    <source>
        <strain>ATCC 14580 / DSM 13 / JCM 2505 / CCUG 7422 / NBRC 12200 / NCIMB 9375 / NCTC 10341 / NRRL NRS-1264 / Gibson 46</strain>
    </source>
</reference>
<keyword id="KW-0456">Lyase</keyword>
<keyword id="KW-1185">Reference proteome</keyword>
<gene>
    <name type="ordered locus">BLi00500</name>
    <name type="ordered locus">BL02808</name>
</gene>
<name>Y2808_BACLD</name>
<proteinExistence type="inferred from homology"/>